<feature type="signal peptide" evidence="2">
    <location>
        <begin position="1"/>
        <end position="20"/>
    </location>
</feature>
<feature type="chain" id="PRO_0000024893" description="Pectate lyase">
    <location>
        <begin position="21"/>
        <end position="401"/>
    </location>
</feature>
<feature type="active site" evidence="2">
    <location>
        <position position="279"/>
    </location>
</feature>
<feature type="binding site" evidence="1">
    <location>
        <position position="199"/>
    </location>
    <ligand>
        <name>Ca(2+)</name>
        <dbReference type="ChEBI" id="CHEBI:29108"/>
    </ligand>
</feature>
<feature type="binding site" evidence="1">
    <location>
        <position position="223"/>
    </location>
    <ligand>
        <name>Ca(2+)</name>
        <dbReference type="ChEBI" id="CHEBI:29108"/>
    </ligand>
</feature>
<feature type="binding site" evidence="1">
    <location>
        <position position="227"/>
    </location>
    <ligand>
        <name>Ca(2+)</name>
        <dbReference type="ChEBI" id="CHEBI:29108"/>
    </ligand>
</feature>
<feature type="glycosylation site" description="N-linked (GlcNAc...) asparagine" evidence="2">
    <location>
        <position position="38"/>
    </location>
</feature>
<sequence length="401" mass="44407">MATTILPLILFISSLAIASSSPSRTPHAIVNEVHKSINASRRNLGYLSCGTGNPIDDCWRCDPNWANNRQRLADCAIGFGKNAMGGRNGRIYVVTDPGNDDPVNPVPGTLRYAVIQDEPLWIIFKRDMVIQLRQELVMNSHKTIDGRGVNVHIGNGPCITIHYASNIIIHGIHIHDCKQAGNGNIRNSPHHSGWWTQSDGDGISIFASKDIWIDHNSLSNCHDGLIDAIHGSTAITISNNYMTHHDKVMLLGHSDSYTQDKNMQVTIAFNHFGEGLVQRMPRCRHGYFHVVNNDYTHWEMYAIGGSASPTIYSQGNRFLAPNTRFDKEVTKHENAPESEWKNWNWRSEGDLMLNGAYFRESGGRAASSFARASSLSGRPSTLVASMTRSAGALVCRKGSRC</sequence>
<dbReference type="EC" id="4.2.2.2"/>
<dbReference type="EMBL" id="Y09541">
    <property type="protein sequence ID" value="CAA70735.1"/>
    <property type="molecule type" value="mRNA"/>
</dbReference>
<dbReference type="SMR" id="O24554"/>
<dbReference type="CAZy" id="PL1">
    <property type="family name" value="Polysaccharide Lyase Family 1"/>
</dbReference>
<dbReference type="UniPathway" id="UPA00545">
    <property type="reaction ID" value="UER00824"/>
</dbReference>
<dbReference type="GO" id="GO:0046872">
    <property type="term" value="F:metal ion binding"/>
    <property type="evidence" value="ECO:0007669"/>
    <property type="project" value="UniProtKB-KW"/>
</dbReference>
<dbReference type="GO" id="GO:0030570">
    <property type="term" value="F:pectate lyase activity"/>
    <property type="evidence" value="ECO:0007669"/>
    <property type="project" value="UniProtKB-EC"/>
</dbReference>
<dbReference type="GO" id="GO:0045490">
    <property type="term" value="P:pectin catabolic process"/>
    <property type="evidence" value="ECO:0007669"/>
    <property type="project" value="UniProtKB-UniPathway"/>
</dbReference>
<dbReference type="FunFam" id="2.160.20.10:FF:000009">
    <property type="entry name" value="Pectate lyase"/>
    <property type="match status" value="1"/>
</dbReference>
<dbReference type="Gene3D" id="2.160.20.10">
    <property type="entry name" value="Single-stranded right-handed beta-helix, Pectin lyase-like"/>
    <property type="match status" value="1"/>
</dbReference>
<dbReference type="InterPro" id="IPR018082">
    <property type="entry name" value="AmbAllergen"/>
</dbReference>
<dbReference type="InterPro" id="IPR002022">
    <property type="entry name" value="Pec_lyase"/>
</dbReference>
<dbReference type="InterPro" id="IPR012334">
    <property type="entry name" value="Pectin_lyas_fold"/>
</dbReference>
<dbReference type="InterPro" id="IPR011050">
    <property type="entry name" value="Pectin_lyase_fold/virulence"/>
</dbReference>
<dbReference type="InterPro" id="IPR045032">
    <property type="entry name" value="PEL"/>
</dbReference>
<dbReference type="PANTHER" id="PTHR31683:SF29">
    <property type="entry name" value="PECTATE LYASE 11-RELATED"/>
    <property type="match status" value="1"/>
</dbReference>
<dbReference type="PANTHER" id="PTHR31683">
    <property type="entry name" value="PECTATE LYASE 18-RELATED"/>
    <property type="match status" value="1"/>
</dbReference>
<dbReference type="Pfam" id="PF00544">
    <property type="entry name" value="Pectate_lyase_4"/>
    <property type="match status" value="1"/>
</dbReference>
<dbReference type="PRINTS" id="PR00807">
    <property type="entry name" value="AMBALLERGEN"/>
</dbReference>
<dbReference type="SMART" id="SM00656">
    <property type="entry name" value="Amb_all"/>
    <property type="match status" value="1"/>
</dbReference>
<dbReference type="SUPFAM" id="SSF51126">
    <property type="entry name" value="Pectin lyase-like"/>
    <property type="match status" value="1"/>
</dbReference>
<reference key="1">
    <citation type="journal article" date="1998" name="Plant J.">
        <title>A pectate lyase from Zinnia elegans is auxin inducible.</title>
        <authorList>
            <person name="Domingo C."/>
            <person name="Roberts K."/>
            <person name="Stacey N.J."/>
            <person name="Connerton I."/>
            <person name="Ruiz-Teran F."/>
            <person name="McCann M.C."/>
        </authorList>
    </citation>
    <scope>NUCLEOTIDE SEQUENCE [MRNA]</scope>
    <source>
        <strain>cv. Envy</strain>
    </source>
</reference>
<keyword id="KW-0106">Calcium</keyword>
<keyword id="KW-0325">Glycoprotein</keyword>
<keyword id="KW-0456">Lyase</keyword>
<keyword id="KW-0479">Metal-binding</keyword>
<keyword id="KW-0732">Signal</keyword>
<protein>
    <recommendedName>
        <fullName>Pectate lyase</fullName>
        <ecNumber>4.2.2.2</ecNumber>
    </recommendedName>
    <alternativeName>
        <fullName>ZePel</fullName>
    </alternativeName>
</protein>
<proteinExistence type="evidence at protein level"/>
<organism>
    <name type="scientific">Zinnia elegans</name>
    <name type="common">Garden zinnia</name>
    <name type="synonym">Zinnia violacea</name>
    <dbReference type="NCBI Taxonomy" id="34245"/>
    <lineage>
        <taxon>Eukaryota</taxon>
        <taxon>Viridiplantae</taxon>
        <taxon>Streptophyta</taxon>
        <taxon>Embryophyta</taxon>
        <taxon>Tracheophyta</taxon>
        <taxon>Spermatophyta</taxon>
        <taxon>Magnoliopsida</taxon>
        <taxon>eudicotyledons</taxon>
        <taxon>Gunneridae</taxon>
        <taxon>Pentapetalae</taxon>
        <taxon>asterids</taxon>
        <taxon>campanulids</taxon>
        <taxon>Asterales</taxon>
        <taxon>Asteraceae</taxon>
        <taxon>Asteroideae</taxon>
        <taxon>Heliantheae alliance</taxon>
        <taxon>Heliantheae</taxon>
        <taxon>Zinnia</taxon>
    </lineage>
</organism>
<comment type="function">
    <text>Involved in the degradation of pectin. May assist in the removal and modification of an existing pectin matrix in order to allow the deposition of newly synthesized walls polymers for a specialized function or to create an architecture that is extensible.</text>
</comment>
<comment type="catalytic activity">
    <reaction>
        <text>Eliminative cleavage of (1-&gt;4)-alpha-D-galacturonan to give oligosaccharides with 4-deoxy-alpha-D-galact-4-enuronosyl groups at their non-reducing ends.</text>
        <dbReference type="EC" id="4.2.2.2"/>
    </reaction>
</comment>
<comment type="cofactor">
    <cofactor>
        <name>Ca(2+)</name>
        <dbReference type="ChEBI" id="CHEBI:29108"/>
    </cofactor>
    <text>Binds 1 Ca(2+) ion. Required for its activity.</text>
</comment>
<comment type="biophysicochemical properties">
    <kinetics>
        <Vmax>0.12 umol/min/mg enzyme</Vmax>
    </kinetics>
    <phDependence>
        <text>Optimum pH is 10.</text>
    </phDependence>
</comment>
<comment type="pathway">
    <text>Glycan metabolism; pectin degradation; 2-dehydro-3-deoxy-D-gluconate from pectin: step 2/5.</text>
</comment>
<comment type="tissue specificity">
    <text>Expressed in sites of vascular differentiation and in new primordia on the flank of the shoot meristem.</text>
</comment>
<comment type="induction">
    <text>Up-regulated by auxin.</text>
</comment>
<comment type="similarity">
    <text evidence="3">Belongs to the polysaccharide lyase 1 family.</text>
</comment>
<evidence type="ECO:0000250" key="1"/>
<evidence type="ECO:0000255" key="2"/>
<evidence type="ECO:0000305" key="3"/>
<accession>O24554</accession>
<name>PLY_ZINEL</name>